<dbReference type="EC" id="2.4.1.227" evidence="1"/>
<dbReference type="EMBL" id="CP001197">
    <property type="protein sequence ID" value="ACL07911.1"/>
    <property type="molecule type" value="Genomic_DNA"/>
</dbReference>
<dbReference type="SMR" id="B8DP79"/>
<dbReference type="STRING" id="883.DvMF_0956"/>
<dbReference type="CAZy" id="GT28">
    <property type="family name" value="Glycosyltransferase Family 28"/>
</dbReference>
<dbReference type="KEGG" id="dvm:DvMF_0956"/>
<dbReference type="eggNOG" id="COG0707">
    <property type="taxonomic scope" value="Bacteria"/>
</dbReference>
<dbReference type="HOGENOM" id="CLU_037404_2_0_7"/>
<dbReference type="OrthoDB" id="9808936at2"/>
<dbReference type="UniPathway" id="UPA00219"/>
<dbReference type="GO" id="GO:0005886">
    <property type="term" value="C:plasma membrane"/>
    <property type="evidence" value="ECO:0007669"/>
    <property type="project" value="UniProtKB-SubCell"/>
</dbReference>
<dbReference type="GO" id="GO:0051991">
    <property type="term" value="F:UDP-N-acetyl-D-glucosamine:N-acetylmuramoyl-L-alanyl-D-glutamyl-meso-2,6-diaminopimelyl-D-alanyl-D-alanine-diphosphoundecaprenol 4-beta-N-acetylglucosaminlytransferase activity"/>
    <property type="evidence" value="ECO:0007669"/>
    <property type="project" value="RHEA"/>
</dbReference>
<dbReference type="GO" id="GO:0050511">
    <property type="term" value="F:undecaprenyldiphospho-muramoylpentapeptide beta-N-acetylglucosaminyltransferase activity"/>
    <property type="evidence" value="ECO:0007669"/>
    <property type="project" value="UniProtKB-UniRule"/>
</dbReference>
<dbReference type="GO" id="GO:0005975">
    <property type="term" value="P:carbohydrate metabolic process"/>
    <property type="evidence" value="ECO:0007669"/>
    <property type="project" value="InterPro"/>
</dbReference>
<dbReference type="GO" id="GO:0051301">
    <property type="term" value="P:cell division"/>
    <property type="evidence" value="ECO:0007669"/>
    <property type="project" value="UniProtKB-KW"/>
</dbReference>
<dbReference type="GO" id="GO:0071555">
    <property type="term" value="P:cell wall organization"/>
    <property type="evidence" value="ECO:0007669"/>
    <property type="project" value="UniProtKB-KW"/>
</dbReference>
<dbReference type="GO" id="GO:0030259">
    <property type="term" value="P:lipid glycosylation"/>
    <property type="evidence" value="ECO:0007669"/>
    <property type="project" value="UniProtKB-UniRule"/>
</dbReference>
<dbReference type="GO" id="GO:0009252">
    <property type="term" value="P:peptidoglycan biosynthetic process"/>
    <property type="evidence" value="ECO:0007669"/>
    <property type="project" value="UniProtKB-UniRule"/>
</dbReference>
<dbReference type="GO" id="GO:0008360">
    <property type="term" value="P:regulation of cell shape"/>
    <property type="evidence" value="ECO:0007669"/>
    <property type="project" value="UniProtKB-KW"/>
</dbReference>
<dbReference type="CDD" id="cd03785">
    <property type="entry name" value="GT28_MurG"/>
    <property type="match status" value="1"/>
</dbReference>
<dbReference type="Gene3D" id="3.40.50.2000">
    <property type="entry name" value="Glycogen Phosphorylase B"/>
    <property type="match status" value="2"/>
</dbReference>
<dbReference type="HAMAP" id="MF_00033">
    <property type="entry name" value="MurG"/>
    <property type="match status" value="1"/>
</dbReference>
<dbReference type="InterPro" id="IPR006009">
    <property type="entry name" value="GlcNAc_MurG"/>
</dbReference>
<dbReference type="InterPro" id="IPR007235">
    <property type="entry name" value="Glyco_trans_28_C"/>
</dbReference>
<dbReference type="InterPro" id="IPR004276">
    <property type="entry name" value="GlycoTrans_28_N"/>
</dbReference>
<dbReference type="NCBIfam" id="TIGR01133">
    <property type="entry name" value="murG"/>
    <property type="match status" value="1"/>
</dbReference>
<dbReference type="PANTHER" id="PTHR21015:SF22">
    <property type="entry name" value="GLYCOSYLTRANSFERASE"/>
    <property type="match status" value="1"/>
</dbReference>
<dbReference type="PANTHER" id="PTHR21015">
    <property type="entry name" value="UDP-N-ACETYLGLUCOSAMINE--N-ACETYLMURAMYL-(PENTAPEPTIDE) PYROPHOSPHORYL-UNDECAPRENOL N-ACETYLGLUCOSAMINE TRANSFERASE 1"/>
    <property type="match status" value="1"/>
</dbReference>
<dbReference type="Pfam" id="PF04101">
    <property type="entry name" value="Glyco_tran_28_C"/>
    <property type="match status" value="1"/>
</dbReference>
<dbReference type="Pfam" id="PF03033">
    <property type="entry name" value="Glyco_transf_28"/>
    <property type="match status" value="1"/>
</dbReference>
<dbReference type="SUPFAM" id="SSF53756">
    <property type="entry name" value="UDP-Glycosyltransferase/glycogen phosphorylase"/>
    <property type="match status" value="1"/>
</dbReference>
<keyword id="KW-0131">Cell cycle</keyword>
<keyword id="KW-0132">Cell division</keyword>
<keyword id="KW-0997">Cell inner membrane</keyword>
<keyword id="KW-1003">Cell membrane</keyword>
<keyword id="KW-0133">Cell shape</keyword>
<keyword id="KW-0961">Cell wall biogenesis/degradation</keyword>
<keyword id="KW-0328">Glycosyltransferase</keyword>
<keyword id="KW-0472">Membrane</keyword>
<keyword id="KW-0573">Peptidoglycan synthesis</keyword>
<keyword id="KW-0808">Transferase</keyword>
<proteinExistence type="inferred from homology"/>
<protein>
    <recommendedName>
        <fullName evidence="1">UDP-N-acetylglucosamine--N-acetylmuramyl-(pentapeptide) pyrophosphoryl-undecaprenol N-acetylglucosamine transferase</fullName>
        <ecNumber evidence="1">2.4.1.227</ecNumber>
    </recommendedName>
    <alternativeName>
        <fullName evidence="1">Undecaprenyl-PP-MurNAc-pentapeptide-UDPGlcNAc GlcNAc transferase</fullName>
    </alternativeName>
</protein>
<organism>
    <name type="scientific">Nitratidesulfovibrio vulgaris (strain DSM 19637 / Miyazaki F)</name>
    <name type="common">Desulfovibrio vulgaris</name>
    <dbReference type="NCBI Taxonomy" id="883"/>
    <lineage>
        <taxon>Bacteria</taxon>
        <taxon>Pseudomonadati</taxon>
        <taxon>Thermodesulfobacteriota</taxon>
        <taxon>Desulfovibrionia</taxon>
        <taxon>Desulfovibrionales</taxon>
        <taxon>Desulfovibrionaceae</taxon>
        <taxon>Nitratidesulfovibrio</taxon>
    </lineage>
</organism>
<evidence type="ECO:0000255" key="1">
    <source>
        <dbReference type="HAMAP-Rule" id="MF_00033"/>
    </source>
</evidence>
<gene>
    <name evidence="1" type="primary">murG</name>
    <name type="ordered locus">DvMF_0956</name>
</gene>
<accession>B8DP79</accession>
<reference key="1">
    <citation type="submission" date="2008-10" db="EMBL/GenBank/DDBJ databases">
        <title>Complete sequence of Desulfovibrio vulgaris str. 'Miyazaki F'.</title>
        <authorList>
            <person name="Lucas S."/>
            <person name="Copeland A."/>
            <person name="Lapidus A."/>
            <person name="Glavina del Rio T."/>
            <person name="Dalin E."/>
            <person name="Tice H."/>
            <person name="Bruce D."/>
            <person name="Goodwin L."/>
            <person name="Pitluck S."/>
            <person name="Sims D."/>
            <person name="Brettin T."/>
            <person name="Detter J.C."/>
            <person name="Han C."/>
            <person name="Larimer F."/>
            <person name="Land M."/>
            <person name="Hauser L."/>
            <person name="Kyrpides N."/>
            <person name="Mikhailova N."/>
            <person name="Hazen T.C."/>
            <person name="Richardson P."/>
        </authorList>
    </citation>
    <scope>NUCLEOTIDE SEQUENCE [LARGE SCALE GENOMIC DNA]</scope>
    <source>
        <strain>DSM 19637 / Miyazaki F</strain>
    </source>
</reference>
<name>MURG_NITV9</name>
<comment type="function">
    <text evidence="1">Cell wall formation. Catalyzes the transfer of a GlcNAc subunit on undecaprenyl-pyrophosphoryl-MurNAc-pentapeptide (lipid intermediate I) to form undecaprenyl-pyrophosphoryl-MurNAc-(pentapeptide)GlcNAc (lipid intermediate II).</text>
</comment>
<comment type="catalytic activity">
    <reaction evidence="1">
        <text>di-trans,octa-cis-undecaprenyl diphospho-N-acetyl-alpha-D-muramoyl-L-alanyl-D-glutamyl-meso-2,6-diaminopimeloyl-D-alanyl-D-alanine + UDP-N-acetyl-alpha-D-glucosamine = di-trans,octa-cis-undecaprenyl diphospho-[N-acetyl-alpha-D-glucosaminyl-(1-&gt;4)]-N-acetyl-alpha-D-muramoyl-L-alanyl-D-glutamyl-meso-2,6-diaminopimeloyl-D-alanyl-D-alanine + UDP + H(+)</text>
        <dbReference type="Rhea" id="RHEA:31227"/>
        <dbReference type="ChEBI" id="CHEBI:15378"/>
        <dbReference type="ChEBI" id="CHEBI:57705"/>
        <dbReference type="ChEBI" id="CHEBI:58223"/>
        <dbReference type="ChEBI" id="CHEBI:61387"/>
        <dbReference type="ChEBI" id="CHEBI:61388"/>
        <dbReference type="EC" id="2.4.1.227"/>
    </reaction>
</comment>
<comment type="pathway">
    <text evidence="1">Cell wall biogenesis; peptidoglycan biosynthesis.</text>
</comment>
<comment type="subcellular location">
    <subcellularLocation>
        <location evidence="1">Cell inner membrane</location>
        <topology evidence="1">Peripheral membrane protein</topology>
        <orientation evidence="1">Cytoplasmic side</orientation>
    </subcellularLocation>
</comment>
<comment type="similarity">
    <text evidence="1">Belongs to the glycosyltransferase 28 family. MurG subfamily.</text>
</comment>
<sequence length="382" mass="39540">MRRVILTTGGTGGHIFPALAVAEEITRRYPKARILFLGGQYGPEADLAARAGLEYVGLPVRGVMGRGLRALAAAGAMGLGVWRAVSVVRRFDPDIAVGFGGYAAFAGVLAARLCGRPAAIHEQNAIPGLTNRLLGHVVQRVFLSLPDTTGVFPARRCVPTGNPVRTAIVAAGAAGAAGAAEKGGVSRSAHSRRLLVMGGSLGARAINEAVVAALPALRDAGVELWHQTGVADWERVRAGYKQAGISEARVEAFIDDVASAYTWADLVLCRAGATSVAELAVAGKPSVLVPFPFATHNHQLHNARHVADAGAALVVEQKDVSPGADGRPAVALDRVLVELLADRERLADMGRAARAMGRPQAAAAVVDGMEAILAGRGARGVR</sequence>
<feature type="chain" id="PRO_1000116473" description="UDP-N-acetylglucosamine--N-acetylmuramyl-(pentapeptide) pyrophosphoryl-undecaprenol N-acetylglucosamine transferase">
    <location>
        <begin position="1"/>
        <end position="382"/>
    </location>
</feature>
<feature type="binding site" evidence="1">
    <location>
        <begin position="11"/>
        <end position="13"/>
    </location>
    <ligand>
        <name>UDP-N-acetyl-alpha-D-glucosamine</name>
        <dbReference type="ChEBI" id="CHEBI:57705"/>
    </ligand>
</feature>
<feature type="binding site" evidence="1">
    <location>
        <position position="124"/>
    </location>
    <ligand>
        <name>UDP-N-acetyl-alpha-D-glucosamine</name>
        <dbReference type="ChEBI" id="CHEBI:57705"/>
    </ligand>
</feature>
<feature type="binding site" evidence="1">
    <location>
        <position position="165"/>
    </location>
    <ligand>
        <name>UDP-N-acetyl-alpha-D-glucosamine</name>
        <dbReference type="ChEBI" id="CHEBI:57705"/>
    </ligand>
</feature>
<feature type="binding site" evidence="1">
    <location>
        <position position="200"/>
    </location>
    <ligand>
        <name>UDP-N-acetyl-alpha-D-glucosamine</name>
        <dbReference type="ChEBI" id="CHEBI:57705"/>
    </ligand>
</feature>
<feature type="binding site" evidence="1">
    <location>
        <position position="254"/>
    </location>
    <ligand>
        <name>UDP-N-acetyl-alpha-D-glucosamine</name>
        <dbReference type="ChEBI" id="CHEBI:57705"/>
    </ligand>
</feature>
<feature type="binding site" evidence="1">
    <location>
        <position position="299"/>
    </location>
    <ligand>
        <name>UDP-N-acetyl-alpha-D-glucosamine</name>
        <dbReference type="ChEBI" id="CHEBI:57705"/>
    </ligand>
</feature>